<sequence length="344" mass="39599">MIRTVKPKNARAKRALVKREAKLVENVKQALFIPGQSCNKNLHDIMVDLSALKKPDMKRFNRKNDIHPFEDMSPLEFFSEKNDCSLMVLMTSSKKRKNNMTFIRTFGYKIYDMIELMVADNFKLLSDFKKLTFTVGLKPMFTFQGAAFDTHPVYKQIKSLFLDFFRGESTDLQDVAGLQHVISMTIQGDFQDGEPLPNVLFRVYKLKSYKSDQGGKRLPRIELVEIGPRLDFKIGRIHTPSPDMVTEAHKKPKQLEMKTKKNVELDIMGDKLGRIHMGKQDLGKLQTRKMKGLKSKFDQGTEEGDGEVDEDYEDEASYSDDGQEYEEEFVSATDIEPSAKRQKK</sequence>
<dbReference type="EMBL" id="Z27116">
    <property type="protein sequence ID" value="CAA81632.1"/>
    <property type="molecule type" value="Genomic_DNA"/>
</dbReference>
<dbReference type="EMBL" id="Z28306">
    <property type="protein sequence ID" value="CAA82160.1"/>
    <property type="molecule type" value="Genomic_DNA"/>
</dbReference>
<dbReference type="EMBL" id="BK006944">
    <property type="protein sequence ID" value="DAA09231.1"/>
    <property type="molecule type" value="Genomic_DNA"/>
</dbReference>
<dbReference type="PIR" id="S38159">
    <property type="entry name" value="S38159"/>
</dbReference>
<dbReference type="RefSeq" id="NP_013007.1">
    <property type="nucleotide sequence ID" value="NM_001179871.1"/>
</dbReference>
<dbReference type="PDB" id="3JCT">
    <property type="method" value="EM"/>
    <property type="resolution" value="3.08 A"/>
    <property type="chains" value="v=1-344"/>
</dbReference>
<dbReference type="PDB" id="5A53">
    <property type="method" value="X-ray"/>
    <property type="resolution" value="2.40 A"/>
    <property type="chains" value="C=23-252"/>
</dbReference>
<dbReference type="PDB" id="5WXL">
    <property type="method" value="X-ray"/>
    <property type="resolution" value="1.90 A"/>
    <property type="chains" value="A/C=19-288"/>
</dbReference>
<dbReference type="PDB" id="6FT6">
    <property type="method" value="EM"/>
    <property type="resolution" value="3.90 A"/>
    <property type="chains" value="v=1-344"/>
</dbReference>
<dbReference type="PDB" id="6M62">
    <property type="method" value="EM"/>
    <property type="resolution" value="3.20 A"/>
    <property type="chains" value="v=1-254"/>
</dbReference>
<dbReference type="PDB" id="7BT6">
    <property type="method" value="EM"/>
    <property type="resolution" value="3.12 A"/>
    <property type="chains" value="v=1-344"/>
</dbReference>
<dbReference type="PDB" id="7BTB">
    <property type="method" value="EM"/>
    <property type="resolution" value="3.22 A"/>
    <property type="chains" value="v=1-344"/>
</dbReference>
<dbReference type="PDB" id="7OH3">
    <property type="method" value="EM"/>
    <property type="resolution" value="3.40 A"/>
    <property type="chains" value="v=1-344"/>
</dbReference>
<dbReference type="PDB" id="7OHQ">
    <property type="method" value="EM"/>
    <property type="resolution" value="3.10 A"/>
    <property type="chains" value="v=1-344"/>
</dbReference>
<dbReference type="PDB" id="7OHT">
    <property type="method" value="EM"/>
    <property type="resolution" value="4.70 A"/>
    <property type="chains" value="v=1-344"/>
</dbReference>
<dbReference type="PDB" id="7UG6">
    <property type="method" value="EM"/>
    <property type="resolution" value="2.90 A"/>
    <property type="chains" value="v=1-344"/>
</dbReference>
<dbReference type="PDB" id="7UOO">
    <property type="method" value="EM"/>
    <property type="resolution" value="2.34 A"/>
    <property type="chains" value="v=1-344"/>
</dbReference>
<dbReference type="PDB" id="7UQB">
    <property type="method" value="EM"/>
    <property type="resolution" value="2.43 A"/>
    <property type="chains" value="v=1-344"/>
</dbReference>
<dbReference type="PDB" id="7UQZ">
    <property type="method" value="EM"/>
    <property type="resolution" value="2.44 A"/>
    <property type="chains" value="v=1-344"/>
</dbReference>
<dbReference type="PDB" id="7V08">
    <property type="method" value="EM"/>
    <property type="resolution" value="2.36 A"/>
    <property type="chains" value="v=1-344"/>
</dbReference>
<dbReference type="PDBsum" id="3JCT"/>
<dbReference type="PDBsum" id="5A53"/>
<dbReference type="PDBsum" id="5WXL"/>
<dbReference type="PDBsum" id="6FT6"/>
<dbReference type="PDBsum" id="6M62"/>
<dbReference type="PDBsum" id="7BT6"/>
<dbReference type="PDBsum" id="7BTB"/>
<dbReference type="PDBsum" id="7OH3"/>
<dbReference type="PDBsum" id="7OHQ"/>
<dbReference type="PDBsum" id="7OHT"/>
<dbReference type="PDBsum" id="7UG6"/>
<dbReference type="PDBsum" id="7UOO"/>
<dbReference type="PDBsum" id="7UQB"/>
<dbReference type="PDBsum" id="7UQZ"/>
<dbReference type="PDBsum" id="7V08"/>
<dbReference type="EMDB" id="EMD-12892"/>
<dbReference type="EMDB" id="EMD-12905"/>
<dbReference type="EMDB" id="EMD-12908"/>
<dbReference type="EMDB" id="EMD-26485"/>
<dbReference type="EMDB" id="EMD-30108"/>
<dbReference type="EMDB" id="EMD-30170"/>
<dbReference type="EMDB" id="EMD-30174"/>
<dbReference type="EMDB" id="EMD-4302"/>
<dbReference type="SMR" id="P36160"/>
<dbReference type="BioGRID" id="34212">
    <property type="interactions" value="503"/>
</dbReference>
<dbReference type="DIP" id="DIP-6602N"/>
<dbReference type="FunCoup" id="P36160">
    <property type="interactions" value="1236"/>
</dbReference>
<dbReference type="IntAct" id="P36160">
    <property type="interactions" value="308"/>
</dbReference>
<dbReference type="MINT" id="P36160"/>
<dbReference type="STRING" id="4932.YKR081C"/>
<dbReference type="iPTMnet" id="P36160"/>
<dbReference type="PaxDb" id="4932-YKR081C"/>
<dbReference type="PeptideAtlas" id="P36160"/>
<dbReference type="EnsemblFungi" id="YKR081C_mRNA">
    <property type="protein sequence ID" value="YKR081C"/>
    <property type="gene ID" value="YKR081C"/>
</dbReference>
<dbReference type="GeneID" id="853956"/>
<dbReference type="KEGG" id="sce:YKR081C"/>
<dbReference type="AGR" id="SGD:S000001789"/>
<dbReference type="SGD" id="S000001789">
    <property type="gene designation" value="RPF2"/>
</dbReference>
<dbReference type="VEuPathDB" id="FungiDB:YKR081C"/>
<dbReference type="eggNOG" id="KOG3031">
    <property type="taxonomic scope" value="Eukaryota"/>
</dbReference>
<dbReference type="GeneTree" id="ENSGT00390000007279"/>
<dbReference type="HOGENOM" id="CLU_049783_0_0_1"/>
<dbReference type="InParanoid" id="P36160"/>
<dbReference type="OMA" id="VGLKPMF"/>
<dbReference type="OrthoDB" id="407658at2759"/>
<dbReference type="BioCyc" id="YEAST:G3O-32044-MONOMER"/>
<dbReference type="BioGRID-ORCS" id="853956">
    <property type="hits" value="5 hits in 10 CRISPR screens"/>
</dbReference>
<dbReference type="CD-CODE" id="BDAE0F88">
    <property type="entry name" value="Nucleolus"/>
</dbReference>
<dbReference type="PRO" id="PR:P36160"/>
<dbReference type="Proteomes" id="UP000002311">
    <property type="component" value="Chromosome XI"/>
</dbReference>
<dbReference type="RNAct" id="P36160">
    <property type="molecule type" value="protein"/>
</dbReference>
<dbReference type="GO" id="GO:0005730">
    <property type="term" value="C:nucleolus"/>
    <property type="evidence" value="ECO:0000314"/>
    <property type="project" value="SGD"/>
</dbReference>
<dbReference type="GO" id="GO:0030687">
    <property type="term" value="C:preribosome, large subunit precursor"/>
    <property type="evidence" value="ECO:0007005"/>
    <property type="project" value="SGD"/>
</dbReference>
<dbReference type="GO" id="GO:0008097">
    <property type="term" value="F:5S rRNA binding"/>
    <property type="evidence" value="ECO:0000314"/>
    <property type="project" value="SGD"/>
</dbReference>
<dbReference type="GO" id="GO:0008312">
    <property type="term" value="F:7S RNA binding"/>
    <property type="evidence" value="ECO:0000314"/>
    <property type="project" value="SGD"/>
</dbReference>
<dbReference type="GO" id="GO:0019843">
    <property type="term" value="F:rRNA binding"/>
    <property type="evidence" value="ECO:0000314"/>
    <property type="project" value="SGD"/>
</dbReference>
<dbReference type="GO" id="GO:1902626">
    <property type="term" value="P:assembly of large subunit precursor of preribosome"/>
    <property type="evidence" value="ECO:0000315"/>
    <property type="project" value="SGD"/>
</dbReference>
<dbReference type="GO" id="GO:0000466">
    <property type="term" value="P:maturation of 5.8S rRNA from tricistronic rRNA transcript (SSU-rRNA, 5.8S rRNA, LSU-rRNA)"/>
    <property type="evidence" value="ECO:0000315"/>
    <property type="project" value="SGD"/>
</dbReference>
<dbReference type="GO" id="GO:0000463">
    <property type="term" value="P:maturation of LSU-rRNA from tricistronic rRNA transcript (SSU-rRNA, 5.8S rRNA, LSU-rRNA)"/>
    <property type="evidence" value="ECO:0000315"/>
    <property type="project" value="SGD"/>
</dbReference>
<dbReference type="GO" id="GO:0000027">
    <property type="term" value="P:ribosomal large subunit assembly"/>
    <property type="evidence" value="ECO:0000315"/>
    <property type="project" value="SGD"/>
</dbReference>
<dbReference type="InterPro" id="IPR007109">
    <property type="entry name" value="Brix"/>
</dbReference>
<dbReference type="InterPro" id="IPR039770">
    <property type="entry name" value="Rpf2"/>
</dbReference>
<dbReference type="PANTHER" id="PTHR12728">
    <property type="entry name" value="BRIX DOMAIN CONTAINING PROTEIN"/>
    <property type="match status" value="1"/>
</dbReference>
<dbReference type="PANTHER" id="PTHR12728:SF0">
    <property type="entry name" value="RIBOSOME PRODUCTION FACTOR 2 HOMOLOG"/>
    <property type="match status" value="1"/>
</dbReference>
<dbReference type="Pfam" id="PF04427">
    <property type="entry name" value="Brix"/>
    <property type="match status" value="1"/>
</dbReference>
<dbReference type="SMART" id="SM00879">
    <property type="entry name" value="Brix"/>
    <property type="match status" value="1"/>
</dbReference>
<dbReference type="PROSITE" id="PS50833">
    <property type="entry name" value="BRIX"/>
    <property type="match status" value="1"/>
</dbReference>
<accession>P36160</accession>
<accession>D6VXE1</accession>
<protein>
    <recommendedName>
        <fullName>Ribosome biogenesis protein RPF2</fullName>
    </recommendedName>
</protein>
<gene>
    <name type="primary">RPF2</name>
    <name type="ordered locus">YKR081C</name>
    <name type="ORF">YKR401</name>
</gene>
<reference key="1">
    <citation type="journal article" date="1994" name="Yeast">
        <title>The complete sequence of an 18,002 bp segment of Saccharomyces cerevisiae chromosome XI contains the HBS1, MRP-L20 and PRP16 genes, and six new open reading frames.</title>
        <authorList>
            <person name="Garcia-Cantalejo J.M."/>
            <person name="Baladron V."/>
            <person name="Esteban P.F."/>
            <person name="Santos M.A."/>
            <person name="Bou G."/>
            <person name="Remacha M.A."/>
            <person name="Revuelta J.L."/>
            <person name="Ballesta J.P.G."/>
            <person name="Jimenez A."/>
            <person name="del Rey F."/>
        </authorList>
    </citation>
    <scope>NUCLEOTIDE SEQUENCE [GENOMIC DNA]</scope>
</reference>
<reference key="2">
    <citation type="journal article" date="1994" name="Nature">
        <title>Complete DNA sequence of yeast chromosome XI.</title>
        <authorList>
            <person name="Dujon B."/>
            <person name="Alexandraki D."/>
            <person name="Andre B."/>
            <person name="Ansorge W."/>
            <person name="Baladron V."/>
            <person name="Ballesta J.P.G."/>
            <person name="Banrevi A."/>
            <person name="Bolle P.-A."/>
            <person name="Bolotin-Fukuhara M."/>
            <person name="Bossier P."/>
            <person name="Bou G."/>
            <person name="Boyer J."/>
            <person name="Buitrago M.J."/>
            <person name="Cheret G."/>
            <person name="Colleaux L."/>
            <person name="Daignan-Fornier B."/>
            <person name="del Rey F."/>
            <person name="Dion C."/>
            <person name="Domdey H."/>
            <person name="Duesterhoeft A."/>
            <person name="Duesterhus S."/>
            <person name="Entian K.-D."/>
            <person name="Erfle H."/>
            <person name="Esteban P.F."/>
            <person name="Feldmann H."/>
            <person name="Fernandes L."/>
            <person name="Fobo G.M."/>
            <person name="Fritz C."/>
            <person name="Fukuhara H."/>
            <person name="Gabel C."/>
            <person name="Gaillon L."/>
            <person name="Garcia-Cantalejo J.M."/>
            <person name="Garcia-Ramirez J.J."/>
            <person name="Gent M.E."/>
            <person name="Ghazvini M."/>
            <person name="Goffeau A."/>
            <person name="Gonzalez A."/>
            <person name="Grothues D."/>
            <person name="Guerreiro P."/>
            <person name="Hegemann J.H."/>
            <person name="Hewitt N."/>
            <person name="Hilger F."/>
            <person name="Hollenberg C.P."/>
            <person name="Horaitis O."/>
            <person name="Indge K.J."/>
            <person name="Jacquier A."/>
            <person name="James C.M."/>
            <person name="Jauniaux J.-C."/>
            <person name="Jimenez A."/>
            <person name="Keuchel H."/>
            <person name="Kirchrath L."/>
            <person name="Kleine K."/>
            <person name="Koetter P."/>
            <person name="Legrain P."/>
            <person name="Liebl S."/>
            <person name="Louis E.J."/>
            <person name="Maia e Silva A."/>
            <person name="Marck C."/>
            <person name="Monnier A.-L."/>
            <person name="Moestl D."/>
            <person name="Mueller S."/>
            <person name="Obermaier B."/>
            <person name="Oliver S.G."/>
            <person name="Pallier C."/>
            <person name="Pascolo S."/>
            <person name="Pfeiffer F."/>
            <person name="Philippsen P."/>
            <person name="Planta R.J."/>
            <person name="Pohl F.M."/>
            <person name="Pohl T.M."/>
            <person name="Poehlmann R."/>
            <person name="Portetelle D."/>
            <person name="Purnelle B."/>
            <person name="Puzos V."/>
            <person name="Ramezani Rad M."/>
            <person name="Rasmussen S.W."/>
            <person name="Remacha M.A."/>
            <person name="Revuelta J.L."/>
            <person name="Richard G.-F."/>
            <person name="Rieger M."/>
            <person name="Rodrigues-Pousada C."/>
            <person name="Rose M."/>
            <person name="Rupp T."/>
            <person name="Santos M.A."/>
            <person name="Schwager C."/>
            <person name="Sensen C."/>
            <person name="Skala J."/>
            <person name="Soares H."/>
            <person name="Sor F."/>
            <person name="Stegemann J."/>
            <person name="Tettelin H."/>
            <person name="Thierry A."/>
            <person name="Tzermia M."/>
            <person name="Urrestarazu L.A."/>
            <person name="van Dyck L."/>
            <person name="van Vliet-Reedijk J.C."/>
            <person name="Valens M."/>
            <person name="Vandenbol M."/>
            <person name="Vilela C."/>
            <person name="Vissers S."/>
            <person name="von Wettstein D."/>
            <person name="Voss H."/>
            <person name="Wiemann S."/>
            <person name="Xu G."/>
            <person name="Zimmermann J."/>
            <person name="Haasemann M."/>
            <person name="Becker I."/>
            <person name="Mewes H.-W."/>
        </authorList>
    </citation>
    <scope>NUCLEOTIDE SEQUENCE [LARGE SCALE GENOMIC DNA]</scope>
    <source>
        <strain>ATCC 204508 / S288c</strain>
    </source>
</reference>
<reference key="3">
    <citation type="journal article" date="2014" name="G3 (Bethesda)">
        <title>The reference genome sequence of Saccharomyces cerevisiae: Then and now.</title>
        <authorList>
            <person name="Engel S.R."/>
            <person name="Dietrich F.S."/>
            <person name="Fisk D.G."/>
            <person name="Binkley G."/>
            <person name="Balakrishnan R."/>
            <person name="Costanzo M.C."/>
            <person name="Dwight S.S."/>
            <person name="Hitz B.C."/>
            <person name="Karra K."/>
            <person name="Nash R.S."/>
            <person name="Weng S."/>
            <person name="Wong E.D."/>
            <person name="Lloyd P."/>
            <person name="Skrzypek M.S."/>
            <person name="Miyasato S.R."/>
            <person name="Simison M."/>
            <person name="Cherry J.M."/>
        </authorList>
    </citation>
    <scope>GENOME REANNOTATION</scope>
    <source>
        <strain>ATCC 204508 / S288c</strain>
    </source>
</reference>
<reference key="4">
    <citation type="journal article" date="2003" name="FEMS Yeast Res.">
        <title>Functional analysis in yeast of the Brix protein superfamily involved in the biogenesis of ribosomes.</title>
        <authorList>
            <person name="Bogengruber E."/>
            <person name="Briza P."/>
            <person name="Doppler E."/>
            <person name="Wimmer H."/>
            <person name="Koller L."/>
            <person name="Fasiolo F."/>
            <person name="Senger B."/>
            <person name="Hegemann J.H."/>
            <person name="Breitenbach M."/>
        </authorList>
    </citation>
    <scope>FUNCTION</scope>
    <scope>SUBCELLULAR LOCATION</scope>
</reference>
<reference key="5">
    <citation type="journal article" date="2003" name="Nature">
        <title>Global analysis of protein expression in yeast.</title>
        <authorList>
            <person name="Ghaemmaghami S."/>
            <person name="Huh W.-K."/>
            <person name="Bower K."/>
            <person name="Howson R.W."/>
            <person name="Belle A."/>
            <person name="Dephoure N."/>
            <person name="O'Shea E.K."/>
            <person name="Weissman J.S."/>
        </authorList>
    </citation>
    <scope>LEVEL OF PROTEIN EXPRESSION [LARGE SCALE ANALYSIS]</scope>
</reference>
<reference key="6">
    <citation type="journal article" date="2007" name="J. Proteome Res.">
        <title>Large-scale phosphorylation analysis of alpha-factor-arrested Saccharomyces cerevisiae.</title>
        <authorList>
            <person name="Li X."/>
            <person name="Gerber S.A."/>
            <person name="Rudner A.D."/>
            <person name="Beausoleil S.A."/>
            <person name="Haas W."/>
            <person name="Villen J."/>
            <person name="Elias J.E."/>
            <person name="Gygi S.P."/>
        </authorList>
    </citation>
    <scope>PHOSPHORYLATION [LARGE SCALE ANALYSIS] AT SER-73</scope>
    <scope>IDENTIFICATION BY MASS SPECTROMETRY [LARGE SCALE ANALYSIS]</scope>
    <source>
        <strain>ADR376</strain>
    </source>
</reference>
<reference key="7">
    <citation type="journal article" date="2023" name="Nat. Struct. Mol. Biol.">
        <title>Structure of nascent 5S RNPs at the crossroad between ribosome assembly and MDM2-p53 pathways.</title>
        <authorList>
            <person name="Castillo Duque de Estrada N.M."/>
            <person name="Thoms M."/>
            <person name="Flemming D."/>
            <person name="Hammaren H.M."/>
            <person name="Buschauer R."/>
            <person name="Ameismeier M."/>
            <person name="Bassler J."/>
            <person name="Beck M."/>
            <person name="Beckmann R."/>
            <person name="Hurt E."/>
        </authorList>
    </citation>
    <scope>SUBUNIT</scope>
</reference>
<comment type="function">
    <text evidence="3">Required for biogenesis of the 60S ribosomal subunit.</text>
</comment>
<comment type="subunit">
    <text evidence="3 5">Part of a complex that includes BRX1, RPF1, RPF2 and SSF1 or SSF2 (PubMed:12702244). Component of a hexameric 5S RNP precursor complex, composed of 5S RNA, RRS1, RPF2, RPL5, RPL11A/RPL11B and SYO1; this complex acts as a precursor for ribosome assembly (PubMed:37291423).</text>
</comment>
<comment type="interaction">
    <interactant intactId="EBI-15881">
        <id>P36160</id>
    </interactant>
    <interactant intactId="EBI-10944">
        <id>Q12176</id>
        <label>MAK21</label>
    </interactant>
    <organismsDiffer>false</organismsDiffer>
    <experiments>5</experiments>
</comment>
<comment type="interaction">
    <interactant intactId="EBI-15881">
        <id>P36160</id>
    </interactant>
    <interactant intactId="EBI-29259">
        <id>P39744</id>
        <label>NOC2</label>
    </interactant>
    <organismsDiffer>false</organismsDiffer>
    <experiments>7</experiments>
</comment>
<comment type="interaction">
    <interactant intactId="EBI-15881">
        <id>P36160</id>
    </interactant>
    <interactant intactId="EBI-12105">
        <id>Q02892</id>
        <label>NOG1</label>
    </interactant>
    <organismsDiffer>false</organismsDiffer>
    <experiments>7</experiments>
</comment>
<comment type="interaction">
    <interactant intactId="EBI-15881">
        <id>P36160</id>
    </interactant>
    <interactant intactId="EBI-22449">
        <id>P40010</id>
        <label>NUG1</label>
    </interactant>
    <organismsDiffer>false</organismsDiffer>
    <experiments>7</experiments>
</comment>
<comment type="interaction">
    <interactant intactId="EBI-15881">
        <id>P36160</id>
    </interactant>
    <interactant intactId="EBI-16026">
        <id>Q08746</id>
        <label>RRS1</label>
    </interactant>
    <organismsDiffer>false</organismsDiffer>
    <experiments>6</experiments>
</comment>
<comment type="interaction">
    <interactant intactId="EBI-15881">
        <id>P36160</id>
    </interactant>
    <interactant intactId="EBI-17814">
        <id>P25582</id>
        <label>SPB1</label>
    </interactant>
    <organismsDiffer>false</organismsDiffer>
    <experiments>7</experiments>
</comment>
<comment type="subcellular location">
    <subcellularLocation>
        <location evidence="3">Nucleus</location>
        <location evidence="3">Nucleolus</location>
    </subcellularLocation>
</comment>
<comment type="miscellaneous">
    <text evidence="4">Present with 32400 molecules/cell in log phase SD medium.</text>
</comment>
<comment type="similarity">
    <text evidence="6">Belongs to the RPF2 family.</text>
</comment>
<organism>
    <name type="scientific">Saccharomyces cerevisiae (strain ATCC 204508 / S288c)</name>
    <name type="common">Baker's yeast</name>
    <dbReference type="NCBI Taxonomy" id="559292"/>
    <lineage>
        <taxon>Eukaryota</taxon>
        <taxon>Fungi</taxon>
        <taxon>Dikarya</taxon>
        <taxon>Ascomycota</taxon>
        <taxon>Saccharomycotina</taxon>
        <taxon>Saccharomycetes</taxon>
        <taxon>Saccharomycetales</taxon>
        <taxon>Saccharomycetaceae</taxon>
        <taxon>Saccharomyces</taxon>
    </lineage>
</organism>
<proteinExistence type="evidence at protein level"/>
<evidence type="ECO:0000255" key="1">
    <source>
        <dbReference type="PROSITE-ProRule" id="PRU00034"/>
    </source>
</evidence>
<evidence type="ECO:0000256" key="2">
    <source>
        <dbReference type="SAM" id="MobiDB-lite"/>
    </source>
</evidence>
<evidence type="ECO:0000269" key="3">
    <source>
    </source>
</evidence>
<evidence type="ECO:0000269" key="4">
    <source>
    </source>
</evidence>
<evidence type="ECO:0000269" key="5">
    <source>
    </source>
</evidence>
<evidence type="ECO:0000305" key="6"/>
<evidence type="ECO:0007744" key="7">
    <source>
    </source>
</evidence>
<evidence type="ECO:0007829" key="8">
    <source>
        <dbReference type="PDB" id="5WXL"/>
    </source>
</evidence>
<feature type="chain" id="PRO_0000120256" description="Ribosome biogenesis protein RPF2">
    <location>
        <begin position="1"/>
        <end position="344"/>
    </location>
</feature>
<feature type="domain" description="Brix" evidence="1">
    <location>
        <begin position="28"/>
        <end position="243"/>
    </location>
</feature>
<feature type="region of interest" description="Disordered" evidence="2">
    <location>
        <begin position="291"/>
        <end position="344"/>
    </location>
</feature>
<feature type="compositionally biased region" description="Acidic residues" evidence="2">
    <location>
        <begin position="300"/>
        <end position="329"/>
    </location>
</feature>
<feature type="modified residue" description="Phosphoserine" evidence="7">
    <location>
        <position position="73"/>
    </location>
</feature>
<feature type="strand" evidence="8">
    <location>
        <begin position="30"/>
        <end position="35"/>
    </location>
</feature>
<feature type="helix" evidence="8">
    <location>
        <begin position="40"/>
        <end position="53"/>
    </location>
</feature>
<feature type="strand" evidence="8">
    <location>
        <begin position="56"/>
        <end position="59"/>
    </location>
</feature>
<feature type="turn" evidence="8">
    <location>
        <begin position="68"/>
        <end position="70"/>
    </location>
</feature>
<feature type="helix" evidence="8">
    <location>
        <begin position="73"/>
        <end position="82"/>
    </location>
</feature>
<feature type="strand" evidence="8">
    <location>
        <begin position="85"/>
        <end position="91"/>
    </location>
</feature>
<feature type="strand" evidence="8">
    <location>
        <begin position="94"/>
        <end position="96"/>
    </location>
</feature>
<feature type="strand" evidence="8">
    <location>
        <begin position="99"/>
        <end position="106"/>
    </location>
</feature>
<feature type="strand" evidence="8">
    <location>
        <begin position="109"/>
        <end position="118"/>
    </location>
</feature>
<feature type="helix" evidence="8">
    <location>
        <begin position="125"/>
        <end position="127"/>
    </location>
</feature>
<feature type="strand" evidence="8">
    <location>
        <begin position="140"/>
        <end position="144"/>
    </location>
</feature>
<feature type="helix" evidence="8">
    <location>
        <begin position="147"/>
        <end position="150"/>
    </location>
</feature>
<feature type="helix" evidence="8">
    <location>
        <begin position="152"/>
        <end position="165"/>
    </location>
</feature>
<feature type="strand" evidence="8">
    <location>
        <begin position="171"/>
        <end position="174"/>
    </location>
</feature>
<feature type="helix" evidence="8">
    <location>
        <begin position="175"/>
        <end position="177"/>
    </location>
</feature>
<feature type="strand" evidence="8">
    <location>
        <begin position="180"/>
        <end position="188"/>
    </location>
</feature>
<feature type="strand" evidence="8">
    <location>
        <begin position="199"/>
        <end position="209"/>
    </location>
</feature>
<feature type="strand" evidence="8">
    <location>
        <begin position="220"/>
        <end position="225"/>
    </location>
</feature>
<feature type="strand" evidence="8">
    <location>
        <begin position="229"/>
        <end position="238"/>
    </location>
</feature>
<feature type="helix" evidence="8">
    <location>
        <begin position="242"/>
        <end position="248"/>
    </location>
</feature>
<keyword id="KW-0002">3D-structure</keyword>
<keyword id="KW-0539">Nucleus</keyword>
<keyword id="KW-0597">Phosphoprotein</keyword>
<keyword id="KW-1185">Reference proteome</keyword>
<name>RPF2_YEAST</name>